<feature type="chain" id="PRO_0000314510" description="Ribosomal RNA large subunit methyltransferase M">
    <location>
        <begin position="1"/>
        <end position="357"/>
    </location>
</feature>
<feature type="active site" description="Proton acceptor" evidence="1">
    <location>
        <position position="307"/>
    </location>
</feature>
<feature type="binding site" evidence="1">
    <location>
        <position position="190"/>
    </location>
    <ligand>
        <name>S-adenosyl-L-methionine</name>
        <dbReference type="ChEBI" id="CHEBI:59789"/>
    </ligand>
</feature>
<feature type="binding site" evidence="1">
    <location>
        <begin position="223"/>
        <end position="226"/>
    </location>
    <ligand>
        <name>S-adenosyl-L-methionine</name>
        <dbReference type="ChEBI" id="CHEBI:59789"/>
    </ligand>
</feature>
<feature type="binding site" evidence="1">
    <location>
        <position position="242"/>
    </location>
    <ligand>
        <name>S-adenosyl-L-methionine</name>
        <dbReference type="ChEBI" id="CHEBI:59789"/>
    </ligand>
</feature>
<feature type="binding site" evidence="1">
    <location>
        <position position="262"/>
    </location>
    <ligand>
        <name>S-adenosyl-L-methionine</name>
        <dbReference type="ChEBI" id="CHEBI:59789"/>
    </ligand>
</feature>
<feature type="binding site" evidence="1">
    <location>
        <position position="278"/>
    </location>
    <ligand>
        <name>S-adenosyl-L-methionine</name>
        <dbReference type="ChEBI" id="CHEBI:59789"/>
    </ligand>
</feature>
<evidence type="ECO:0000255" key="1">
    <source>
        <dbReference type="HAMAP-Rule" id="MF_01551"/>
    </source>
</evidence>
<gene>
    <name evidence="1" type="primary">rlmM</name>
    <name type="ordered locus">Csal_2412</name>
</gene>
<sequence length="357" mass="40425">MAVCPHEWLLYCRPGFEKDLSAELADKTAHAGQGGYPIAARDSGHVRFVLDPETPANEVHRALPLEALVFARQSLVAFPPLEALPRDDRLSAIVDLVVASGWSFESIWQETPDTNEEKALAGLMKALRKPLESTLKKRGALRRKAGGRRLHLFWTAGDRVQLAMSFPGNRAEHLGGIPRLKFPREAPSRSTLKLEEAWHVFVPREAWPTRLSDSMQAADLGAAPGGWTYQLVRKGMYVYAIDNGPMDDALMASGQVEHLCEDGFVWQPPMRLDWLVCDIVDKPMRVIDMVERWLVAPWCHEAIFNLKLPMKKRWDEVSRCLERLASSLDQAGIRARIRCRHLYHDREEVTVHVCLLD</sequence>
<accession>Q1QUU9</accession>
<name>RLMM_CHRSD</name>
<reference key="1">
    <citation type="journal article" date="2011" name="Stand. Genomic Sci.">
        <title>Complete genome sequence of the halophilic and highly halotolerant Chromohalobacter salexigens type strain (1H11(T)).</title>
        <authorList>
            <person name="Copeland A."/>
            <person name="O'Connor K."/>
            <person name="Lucas S."/>
            <person name="Lapidus A."/>
            <person name="Berry K.W."/>
            <person name="Detter J.C."/>
            <person name="Del Rio T.G."/>
            <person name="Hammon N."/>
            <person name="Dalin E."/>
            <person name="Tice H."/>
            <person name="Pitluck S."/>
            <person name="Bruce D."/>
            <person name="Goodwin L."/>
            <person name="Han C."/>
            <person name="Tapia R."/>
            <person name="Saunders E."/>
            <person name="Schmutz J."/>
            <person name="Brettin T."/>
            <person name="Larimer F."/>
            <person name="Land M."/>
            <person name="Hauser L."/>
            <person name="Vargas C."/>
            <person name="Nieto J.J."/>
            <person name="Kyrpides N.C."/>
            <person name="Ivanova N."/>
            <person name="Goker M."/>
            <person name="Klenk H.P."/>
            <person name="Csonka L.N."/>
            <person name="Woyke T."/>
        </authorList>
    </citation>
    <scope>NUCLEOTIDE SEQUENCE [LARGE SCALE GENOMIC DNA]</scope>
    <source>
        <strain>ATCC BAA-138 / DSM 3043 / CIP 106854 / NCIMB 13768 / 1H11</strain>
    </source>
</reference>
<organism>
    <name type="scientific">Chromohalobacter salexigens (strain ATCC BAA-138 / DSM 3043 / CIP 106854 / NCIMB 13768 / 1H11)</name>
    <dbReference type="NCBI Taxonomy" id="290398"/>
    <lineage>
        <taxon>Bacteria</taxon>
        <taxon>Pseudomonadati</taxon>
        <taxon>Pseudomonadota</taxon>
        <taxon>Gammaproteobacteria</taxon>
        <taxon>Oceanospirillales</taxon>
        <taxon>Halomonadaceae</taxon>
        <taxon>Chromohalobacter</taxon>
    </lineage>
</organism>
<dbReference type="EC" id="2.1.1.186" evidence="1"/>
<dbReference type="EMBL" id="CP000285">
    <property type="protein sequence ID" value="ABE59759.1"/>
    <property type="molecule type" value="Genomic_DNA"/>
</dbReference>
<dbReference type="RefSeq" id="WP_011507705.1">
    <property type="nucleotide sequence ID" value="NC_007963.1"/>
</dbReference>
<dbReference type="SMR" id="Q1QUU9"/>
<dbReference type="STRING" id="290398.Csal_2412"/>
<dbReference type="GeneID" id="95335113"/>
<dbReference type="KEGG" id="csa:Csal_2412"/>
<dbReference type="eggNOG" id="COG2933">
    <property type="taxonomic scope" value="Bacteria"/>
</dbReference>
<dbReference type="HOGENOM" id="CLU_043780_0_0_6"/>
<dbReference type="OrthoDB" id="154490at2"/>
<dbReference type="Proteomes" id="UP000000239">
    <property type="component" value="Chromosome"/>
</dbReference>
<dbReference type="GO" id="GO:0005737">
    <property type="term" value="C:cytoplasm"/>
    <property type="evidence" value="ECO:0007669"/>
    <property type="project" value="UniProtKB-SubCell"/>
</dbReference>
<dbReference type="GO" id="GO:0008757">
    <property type="term" value="F:S-adenosylmethionine-dependent methyltransferase activity"/>
    <property type="evidence" value="ECO:0007669"/>
    <property type="project" value="UniProtKB-UniRule"/>
</dbReference>
<dbReference type="GO" id="GO:0032259">
    <property type="term" value="P:methylation"/>
    <property type="evidence" value="ECO:0007669"/>
    <property type="project" value="UniProtKB-KW"/>
</dbReference>
<dbReference type="GO" id="GO:0006364">
    <property type="term" value="P:rRNA processing"/>
    <property type="evidence" value="ECO:0007669"/>
    <property type="project" value="UniProtKB-UniRule"/>
</dbReference>
<dbReference type="Gene3D" id="3.30.2300.20">
    <property type="match status" value="1"/>
</dbReference>
<dbReference type="Gene3D" id="3.30.70.2810">
    <property type="match status" value="1"/>
</dbReference>
<dbReference type="Gene3D" id="3.40.50.150">
    <property type="entry name" value="Vaccinia Virus protein VP39"/>
    <property type="match status" value="1"/>
</dbReference>
<dbReference type="HAMAP" id="MF_01551">
    <property type="entry name" value="23SrRNA_methyltr_M"/>
    <property type="match status" value="1"/>
</dbReference>
<dbReference type="InterPro" id="IPR040739">
    <property type="entry name" value="RlmM_FDX"/>
</dbReference>
<dbReference type="InterPro" id="IPR048646">
    <property type="entry name" value="RlmM_THUMP-like"/>
</dbReference>
<dbReference type="InterPro" id="IPR002877">
    <property type="entry name" value="RNA_MeTrfase_FtsJ_dom"/>
</dbReference>
<dbReference type="InterPro" id="IPR011224">
    <property type="entry name" value="rRNA_MeTrfase_M"/>
</dbReference>
<dbReference type="InterPro" id="IPR029063">
    <property type="entry name" value="SAM-dependent_MTases_sf"/>
</dbReference>
<dbReference type="NCBIfam" id="NF008734">
    <property type="entry name" value="PRK11760.1"/>
    <property type="match status" value="1"/>
</dbReference>
<dbReference type="PANTHER" id="PTHR37524">
    <property type="entry name" value="RIBOSOMAL RNA LARGE SUBUNIT METHYLTRANSFERASE M"/>
    <property type="match status" value="1"/>
</dbReference>
<dbReference type="PANTHER" id="PTHR37524:SF2">
    <property type="entry name" value="RIBOSOMAL RNA METHYLTRANSFERASE FTSJ DOMAIN-CONTAINING PROTEIN"/>
    <property type="match status" value="1"/>
</dbReference>
<dbReference type="Pfam" id="PF01728">
    <property type="entry name" value="FtsJ"/>
    <property type="match status" value="1"/>
</dbReference>
<dbReference type="Pfam" id="PF18125">
    <property type="entry name" value="RlmM_FDX"/>
    <property type="match status" value="1"/>
</dbReference>
<dbReference type="Pfam" id="PF21239">
    <property type="entry name" value="RLMM_N"/>
    <property type="match status" value="1"/>
</dbReference>
<dbReference type="PIRSF" id="PIRSF028774">
    <property type="entry name" value="UCP028774"/>
    <property type="match status" value="1"/>
</dbReference>
<dbReference type="SUPFAM" id="SSF53335">
    <property type="entry name" value="S-adenosyl-L-methionine-dependent methyltransferases"/>
    <property type="match status" value="1"/>
</dbReference>
<protein>
    <recommendedName>
        <fullName evidence="1">Ribosomal RNA large subunit methyltransferase M</fullName>
        <ecNumber evidence="1">2.1.1.186</ecNumber>
    </recommendedName>
    <alternativeName>
        <fullName evidence="1">23S rRNA (cytidine2498-2'-O)-methyltransferase</fullName>
    </alternativeName>
    <alternativeName>
        <fullName evidence="1">23S rRNA 2'-O-ribose methyltransferase RlmM</fullName>
    </alternativeName>
</protein>
<keyword id="KW-0963">Cytoplasm</keyword>
<keyword id="KW-0489">Methyltransferase</keyword>
<keyword id="KW-1185">Reference proteome</keyword>
<keyword id="KW-0698">rRNA processing</keyword>
<keyword id="KW-0949">S-adenosyl-L-methionine</keyword>
<keyword id="KW-0808">Transferase</keyword>
<proteinExistence type="inferred from homology"/>
<comment type="function">
    <text evidence="1">Catalyzes the 2'-O-methylation at nucleotide C2498 in 23S rRNA.</text>
</comment>
<comment type="catalytic activity">
    <reaction evidence="1">
        <text>cytidine(2498) in 23S rRNA + S-adenosyl-L-methionine = 2'-O-methylcytidine(2498) in 23S rRNA + S-adenosyl-L-homocysteine + H(+)</text>
        <dbReference type="Rhea" id="RHEA:42788"/>
        <dbReference type="Rhea" id="RHEA-COMP:10244"/>
        <dbReference type="Rhea" id="RHEA-COMP:10245"/>
        <dbReference type="ChEBI" id="CHEBI:15378"/>
        <dbReference type="ChEBI" id="CHEBI:57856"/>
        <dbReference type="ChEBI" id="CHEBI:59789"/>
        <dbReference type="ChEBI" id="CHEBI:74495"/>
        <dbReference type="ChEBI" id="CHEBI:82748"/>
        <dbReference type="EC" id="2.1.1.186"/>
    </reaction>
</comment>
<comment type="subunit">
    <text evidence="1">Monomer.</text>
</comment>
<comment type="subcellular location">
    <subcellularLocation>
        <location evidence="1">Cytoplasm</location>
    </subcellularLocation>
</comment>
<comment type="similarity">
    <text evidence="1">Belongs to the class I-like SAM-binding methyltransferase superfamily. RNA methyltransferase RlmE family. RlmM subfamily.</text>
</comment>